<gene>
    <name evidence="1" type="primary">nuoK</name>
    <name type="ordered locus">SBO_2312</name>
</gene>
<feature type="chain" id="PRO_0000390237" description="NADH-quinone oxidoreductase subunit K">
    <location>
        <begin position="1"/>
        <end position="100"/>
    </location>
</feature>
<feature type="transmembrane region" description="Helical" evidence="1">
    <location>
        <begin position="4"/>
        <end position="24"/>
    </location>
</feature>
<feature type="transmembrane region" description="Helical" evidence="1">
    <location>
        <begin position="28"/>
        <end position="48"/>
    </location>
</feature>
<feature type="transmembrane region" description="Helical" evidence="1">
    <location>
        <begin position="60"/>
        <end position="80"/>
    </location>
</feature>
<keyword id="KW-0997">Cell inner membrane</keyword>
<keyword id="KW-1003">Cell membrane</keyword>
<keyword id="KW-0472">Membrane</keyword>
<keyword id="KW-0520">NAD</keyword>
<keyword id="KW-0874">Quinone</keyword>
<keyword id="KW-1278">Translocase</keyword>
<keyword id="KW-0812">Transmembrane</keyword>
<keyword id="KW-1133">Transmembrane helix</keyword>
<keyword id="KW-0813">Transport</keyword>
<keyword id="KW-0830">Ubiquinone</keyword>
<organism>
    <name type="scientific">Shigella boydii serotype 4 (strain Sb227)</name>
    <dbReference type="NCBI Taxonomy" id="300268"/>
    <lineage>
        <taxon>Bacteria</taxon>
        <taxon>Pseudomonadati</taxon>
        <taxon>Pseudomonadota</taxon>
        <taxon>Gammaproteobacteria</taxon>
        <taxon>Enterobacterales</taxon>
        <taxon>Enterobacteriaceae</taxon>
        <taxon>Shigella</taxon>
    </lineage>
</organism>
<accession>Q31YI2</accession>
<dbReference type="EC" id="7.1.1.-" evidence="1"/>
<dbReference type="EMBL" id="CP000036">
    <property type="protein sequence ID" value="ABB66876.1"/>
    <property type="molecule type" value="Genomic_DNA"/>
</dbReference>
<dbReference type="RefSeq" id="WP_000612645.1">
    <property type="nucleotide sequence ID" value="NC_007613.1"/>
</dbReference>
<dbReference type="SMR" id="Q31YI2"/>
<dbReference type="KEGG" id="sbo:SBO_2312"/>
<dbReference type="HOGENOM" id="CLU_144724_0_1_6"/>
<dbReference type="Proteomes" id="UP000007067">
    <property type="component" value="Chromosome"/>
</dbReference>
<dbReference type="GO" id="GO:0030964">
    <property type="term" value="C:NADH dehydrogenase complex"/>
    <property type="evidence" value="ECO:0007669"/>
    <property type="project" value="TreeGrafter"/>
</dbReference>
<dbReference type="GO" id="GO:0005886">
    <property type="term" value="C:plasma membrane"/>
    <property type="evidence" value="ECO:0007669"/>
    <property type="project" value="UniProtKB-SubCell"/>
</dbReference>
<dbReference type="GO" id="GO:0050136">
    <property type="term" value="F:NADH:ubiquinone reductase (non-electrogenic) activity"/>
    <property type="evidence" value="ECO:0007669"/>
    <property type="project" value="UniProtKB-UniRule"/>
</dbReference>
<dbReference type="GO" id="GO:0048038">
    <property type="term" value="F:quinone binding"/>
    <property type="evidence" value="ECO:0007669"/>
    <property type="project" value="UniProtKB-KW"/>
</dbReference>
<dbReference type="GO" id="GO:0042773">
    <property type="term" value="P:ATP synthesis coupled electron transport"/>
    <property type="evidence" value="ECO:0007669"/>
    <property type="project" value="InterPro"/>
</dbReference>
<dbReference type="FunFam" id="1.10.287.3510:FF:000001">
    <property type="entry name" value="NADH-quinone oxidoreductase subunit K"/>
    <property type="match status" value="1"/>
</dbReference>
<dbReference type="Gene3D" id="1.10.287.3510">
    <property type="match status" value="1"/>
</dbReference>
<dbReference type="HAMAP" id="MF_01456">
    <property type="entry name" value="NDH1_NuoK"/>
    <property type="match status" value="1"/>
</dbReference>
<dbReference type="InterPro" id="IPR001133">
    <property type="entry name" value="NADH_UbQ_OxRdtase_chain4L/K"/>
</dbReference>
<dbReference type="InterPro" id="IPR039428">
    <property type="entry name" value="NUOK/Mnh_C1-like"/>
</dbReference>
<dbReference type="NCBIfam" id="NF004319">
    <property type="entry name" value="PRK05715.1-1"/>
    <property type="match status" value="1"/>
</dbReference>
<dbReference type="NCBIfam" id="NF004320">
    <property type="entry name" value="PRK05715.1-2"/>
    <property type="match status" value="1"/>
</dbReference>
<dbReference type="PANTHER" id="PTHR11434:SF16">
    <property type="entry name" value="NADH-UBIQUINONE OXIDOREDUCTASE CHAIN 4L"/>
    <property type="match status" value="1"/>
</dbReference>
<dbReference type="PANTHER" id="PTHR11434">
    <property type="entry name" value="NADH-UBIQUINONE OXIDOREDUCTASE SUBUNIT ND4L"/>
    <property type="match status" value="1"/>
</dbReference>
<dbReference type="Pfam" id="PF00420">
    <property type="entry name" value="Oxidored_q2"/>
    <property type="match status" value="1"/>
</dbReference>
<evidence type="ECO:0000255" key="1">
    <source>
        <dbReference type="HAMAP-Rule" id="MF_01456"/>
    </source>
</evidence>
<name>NUOK_SHIBS</name>
<protein>
    <recommendedName>
        <fullName evidence="1">NADH-quinone oxidoreductase subunit K</fullName>
        <ecNumber evidence="1">7.1.1.-</ecNumber>
    </recommendedName>
    <alternativeName>
        <fullName evidence="1">NADH dehydrogenase I subunit K</fullName>
    </alternativeName>
    <alternativeName>
        <fullName evidence="1">NDH-1 subunit K</fullName>
    </alternativeName>
</protein>
<proteinExistence type="inferred from homology"/>
<comment type="function">
    <text evidence="1">NDH-1 shuttles electrons from NADH, via FMN and iron-sulfur (Fe-S) centers, to quinones in the respiratory chain. The immediate electron acceptor for the enzyme in this species is believed to be ubiquinone. Couples the redox reaction to proton translocation (for every two electrons transferred, four hydrogen ions are translocated across the cytoplasmic membrane), and thus conserves the redox energy in a proton gradient.</text>
</comment>
<comment type="catalytic activity">
    <reaction evidence="1">
        <text>a quinone + NADH + 5 H(+)(in) = a quinol + NAD(+) + 4 H(+)(out)</text>
        <dbReference type="Rhea" id="RHEA:57888"/>
        <dbReference type="ChEBI" id="CHEBI:15378"/>
        <dbReference type="ChEBI" id="CHEBI:24646"/>
        <dbReference type="ChEBI" id="CHEBI:57540"/>
        <dbReference type="ChEBI" id="CHEBI:57945"/>
        <dbReference type="ChEBI" id="CHEBI:132124"/>
    </reaction>
</comment>
<comment type="subunit">
    <text evidence="1">NDH-1 is composed of 13 different subunits. Subunits NuoA, H, J, K, L, M, N constitute the membrane sector of the complex.</text>
</comment>
<comment type="subcellular location">
    <subcellularLocation>
        <location evidence="1">Cell inner membrane</location>
        <topology evidence="1">Multi-pass membrane protein</topology>
    </subcellularLocation>
</comment>
<comment type="similarity">
    <text evidence="1">Belongs to the complex I subunit 4L family.</text>
</comment>
<sequence length="100" mass="10861">MIPLQHGLILSAILFVLGLTGLVIRRNLLFMLIGLEIMINASALAFVVAGSYWGQTDGQVMYILAISLAAAEASIGLALLLQLHRRRQNLNIDSVSEMRG</sequence>
<reference key="1">
    <citation type="journal article" date="2005" name="Nucleic Acids Res.">
        <title>Genome dynamics and diversity of Shigella species, the etiologic agents of bacillary dysentery.</title>
        <authorList>
            <person name="Yang F."/>
            <person name="Yang J."/>
            <person name="Zhang X."/>
            <person name="Chen L."/>
            <person name="Jiang Y."/>
            <person name="Yan Y."/>
            <person name="Tang X."/>
            <person name="Wang J."/>
            <person name="Xiong Z."/>
            <person name="Dong J."/>
            <person name="Xue Y."/>
            <person name="Zhu Y."/>
            <person name="Xu X."/>
            <person name="Sun L."/>
            <person name="Chen S."/>
            <person name="Nie H."/>
            <person name="Peng J."/>
            <person name="Xu J."/>
            <person name="Wang Y."/>
            <person name="Yuan Z."/>
            <person name="Wen Y."/>
            <person name="Yao Z."/>
            <person name="Shen Y."/>
            <person name="Qiang B."/>
            <person name="Hou Y."/>
            <person name="Yu J."/>
            <person name="Jin Q."/>
        </authorList>
    </citation>
    <scope>NUCLEOTIDE SEQUENCE [LARGE SCALE GENOMIC DNA]</scope>
    <source>
        <strain>Sb227</strain>
    </source>
</reference>